<organism>
    <name type="scientific">Mycobacterium tuberculosis (strain CDC 1551 / Oshkosh)</name>
    <dbReference type="NCBI Taxonomy" id="83331"/>
    <lineage>
        <taxon>Bacteria</taxon>
        <taxon>Bacillati</taxon>
        <taxon>Actinomycetota</taxon>
        <taxon>Actinomycetes</taxon>
        <taxon>Mycobacteriales</taxon>
        <taxon>Mycobacteriaceae</taxon>
        <taxon>Mycobacterium</taxon>
        <taxon>Mycobacterium tuberculosis complex</taxon>
    </lineage>
</organism>
<name>RS14_MYCTO</name>
<comment type="function">
    <text evidence="1">Binds 16S rRNA, required for the assembly of 30S particles and may also be responsible for determining the conformation of the 16S rRNA at the A site.</text>
</comment>
<comment type="subunit">
    <text evidence="1">Part of the 30S ribosomal subunit. Contacts proteins S3 and S10.</text>
</comment>
<comment type="similarity">
    <text evidence="1">Belongs to the universal ribosomal protein uS14 family.</text>
</comment>
<reference key="1">
    <citation type="journal article" date="2002" name="J. Bacteriol.">
        <title>Whole-genome comparison of Mycobacterium tuberculosis clinical and laboratory strains.</title>
        <authorList>
            <person name="Fleischmann R.D."/>
            <person name="Alland D."/>
            <person name="Eisen J.A."/>
            <person name="Carpenter L."/>
            <person name="White O."/>
            <person name="Peterson J.D."/>
            <person name="DeBoy R.T."/>
            <person name="Dodson R.J."/>
            <person name="Gwinn M.L."/>
            <person name="Haft D.H."/>
            <person name="Hickey E.K."/>
            <person name="Kolonay J.F."/>
            <person name="Nelson W.C."/>
            <person name="Umayam L.A."/>
            <person name="Ermolaeva M.D."/>
            <person name="Salzberg S.L."/>
            <person name="Delcher A."/>
            <person name="Utterback T.R."/>
            <person name="Weidman J.F."/>
            <person name="Khouri H.M."/>
            <person name="Gill J."/>
            <person name="Mikula A."/>
            <person name="Bishai W."/>
            <person name="Jacobs W.R. Jr."/>
            <person name="Venter J.C."/>
            <person name="Fraser C.M."/>
        </authorList>
    </citation>
    <scope>NUCLEOTIDE SEQUENCE [LARGE SCALE GENOMIC DNA]</scope>
    <source>
        <strain>CDC 1551 / Oshkosh</strain>
    </source>
</reference>
<proteinExistence type="inferred from homology"/>
<accession>P9WH58</accession>
<accession>L0TBC9</accession>
<accession>O86355</accession>
<accession>P66405</accession>
<gene>
    <name evidence="1" type="primary">rpsN</name>
    <name type="synonym">rpsN2</name>
    <name type="ordered locus">MT2117</name>
</gene>
<protein>
    <recommendedName>
        <fullName evidence="1">Small ribosomal subunit protein uS14A</fullName>
    </recommendedName>
    <alternativeName>
        <fullName evidence="3">30S ribosomal protein S14</fullName>
    </alternativeName>
</protein>
<keyword id="KW-1185">Reference proteome</keyword>
<keyword id="KW-0687">Ribonucleoprotein</keyword>
<keyword id="KW-0689">Ribosomal protein</keyword>
<keyword id="KW-0694">RNA-binding</keyword>
<keyword id="KW-0699">rRNA-binding</keyword>
<sequence>MAKKSKIVKNQRRAATVARYASRRTALKDIIRSPSSAPEQRSTAQRALARQPRDASPVRLRNRDAIDGRPRGHLRKFGLSRVRVRQLAHDGHLPGVRKASW</sequence>
<feature type="chain" id="PRO_0000428244" description="Small ribosomal subunit protein uS14A">
    <location>
        <begin position="1"/>
        <end position="101"/>
    </location>
</feature>
<feature type="region of interest" description="Disordered" evidence="2">
    <location>
        <begin position="28"/>
        <end position="57"/>
    </location>
</feature>
<feature type="compositionally biased region" description="Polar residues" evidence="2">
    <location>
        <begin position="33"/>
        <end position="45"/>
    </location>
</feature>
<dbReference type="EMBL" id="AE000516">
    <property type="protein sequence ID" value="AAK46396.1"/>
    <property type="molecule type" value="Genomic_DNA"/>
</dbReference>
<dbReference type="PIR" id="G70945">
    <property type="entry name" value="G70945"/>
</dbReference>
<dbReference type="RefSeq" id="WP_003410624.1">
    <property type="nucleotide sequence ID" value="NZ_KK341227.1"/>
</dbReference>
<dbReference type="SMR" id="P9WH58"/>
<dbReference type="GeneID" id="45426034"/>
<dbReference type="KEGG" id="mtc:MT2117"/>
<dbReference type="PATRIC" id="fig|83331.31.peg.2283"/>
<dbReference type="HOGENOM" id="CLU_139869_0_1_11"/>
<dbReference type="Proteomes" id="UP000001020">
    <property type="component" value="Chromosome"/>
</dbReference>
<dbReference type="GO" id="GO:0015935">
    <property type="term" value="C:small ribosomal subunit"/>
    <property type="evidence" value="ECO:0007669"/>
    <property type="project" value="TreeGrafter"/>
</dbReference>
<dbReference type="GO" id="GO:0019843">
    <property type="term" value="F:rRNA binding"/>
    <property type="evidence" value="ECO:0007669"/>
    <property type="project" value="UniProtKB-UniRule"/>
</dbReference>
<dbReference type="GO" id="GO:0003735">
    <property type="term" value="F:structural constituent of ribosome"/>
    <property type="evidence" value="ECO:0007669"/>
    <property type="project" value="InterPro"/>
</dbReference>
<dbReference type="GO" id="GO:0006412">
    <property type="term" value="P:translation"/>
    <property type="evidence" value="ECO:0007669"/>
    <property type="project" value="UniProtKB-UniRule"/>
</dbReference>
<dbReference type="FunFam" id="1.10.287.1480:FF:000001">
    <property type="entry name" value="30S ribosomal protein S14"/>
    <property type="match status" value="1"/>
</dbReference>
<dbReference type="Gene3D" id="1.10.287.1480">
    <property type="match status" value="1"/>
</dbReference>
<dbReference type="HAMAP" id="MF_00537">
    <property type="entry name" value="Ribosomal_uS14_1"/>
    <property type="match status" value="1"/>
</dbReference>
<dbReference type="InterPro" id="IPR001209">
    <property type="entry name" value="Ribosomal_uS14"/>
</dbReference>
<dbReference type="InterPro" id="IPR023036">
    <property type="entry name" value="Ribosomal_uS14_bac/plastid"/>
</dbReference>
<dbReference type="NCBIfam" id="NF006477">
    <property type="entry name" value="PRK08881.1"/>
    <property type="match status" value="1"/>
</dbReference>
<dbReference type="PANTHER" id="PTHR19836">
    <property type="entry name" value="30S RIBOSOMAL PROTEIN S14"/>
    <property type="match status" value="1"/>
</dbReference>
<dbReference type="PANTHER" id="PTHR19836:SF23">
    <property type="entry name" value="SMALL RIBOSOMAL SUBUNIT PROTEIN US14A"/>
    <property type="match status" value="1"/>
</dbReference>
<dbReference type="Pfam" id="PF00253">
    <property type="entry name" value="Ribosomal_S14"/>
    <property type="match status" value="1"/>
</dbReference>
<dbReference type="SUPFAM" id="SSF57716">
    <property type="entry name" value="Glucocorticoid receptor-like (DNA-binding domain)"/>
    <property type="match status" value="1"/>
</dbReference>
<evidence type="ECO:0000255" key="1">
    <source>
        <dbReference type="HAMAP-Rule" id="MF_00537"/>
    </source>
</evidence>
<evidence type="ECO:0000256" key="2">
    <source>
        <dbReference type="SAM" id="MobiDB-lite"/>
    </source>
</evidence>
<evidence type="ECO:0000305" key="3"/>